<organism>
    <name type="scientific">Brachyspira hyodysenteriae (strain ATCC 49526 / WA1)</name>
    <dbReference type="NCBI Taxonomy" id="565034"/>
    <lineage>
        <taxon>Bacteria</taxon>
        <taxon>Pseudomonadati</taxon>
        <taxon>Spirochaetota</taxon>
        <taxon>Spirochaetia</taxon>
        <taxon>Brachyspirales</taxon>
        <taxon>Brachyspiraceae</taxon>
        <taxon>Brachyspira</taxon>
    </lineage>
</organism>
<keyword id="KW-0028">Amino-acid biosynthesis</keyword>
<keyword id="KW-0963">Cytoplasm</keyword>
<keyword id="KW-0220">Diaminopimelate biosynthesis</keyword>
<keyword id="KW-0457">Lysine biosynthesis</keyword>
<keyword id="KW-0520">NAD</keyword>
<keyword id="KW-0521">NADP</keyword>
<keyword id="KW-0560">Oxidoreductase</keyword>
<proteinExistence type="inferred from homology"/>
<accession>C0R175</accession>
<comment type="function">
    <text evidence="1">Catalyzes the conversion of 4-hydroxy-tetrahydrodipicolinate (HTPA) to tetrahydrodipicolinate.</text>
</comment>
<comment type="catalytic activity">
    <reaction evidence="1">
        <text>(S)-2,3,4,5-tetrahydrodipicolinate + NAD(+) + H2O = (2S,4S)-4-hydroxy-2,3,4,5-tetrahydrodipicolinate + NADH + H(+)</text>
        <dbReference type="Rhea" id="RHEA:35323"/>
        <dbReference type="ChEBI" id="CHEBI:15377"/>
        <dbReference type="ChEBI" id="CHEBI:15378"/>
        <dbReference type="ChEBI" id="CHEBI:16845"/>
        <dbReference type="ChEBI" id="CHEBI:57540"/>
        <dbReference type="ChEBI" id="CHEBI:57945"/>
        <dbReference type="ChEBI" id="CHEBI:67139"/>
        <dbReference type="EC" id="1.17.1.8"/>
    </reaction>
</comment>
<comment type="catalytic activity">
    <reaction evidence="1">
        <text>(S)-2,3,4,5-tetrahydrodipicolinate + NADP(+) + H2O = (2S,4S)-4-hydroxy-2,3,4,5-tetrahydrodipicolinate + NADPH + H(+)</text>
        <dbReference type="Rhea" id="RHEA:35331"/>
        <dbReference type="ChEBI" id="CHEBI:15377"/>
        <dbReference type="ChEBI" id="CHEBI:15378"/>
        <dbReference type="ChEBI" id="CHEBI:16845"/>
        <dbReference type="ChEBI" id="CHEBI:57783"/>
        <dbReference type="ChEBI" id="CHEBI:58349"/>
        <dbReference type="ChEBI" id="CHEBI:67139"/>
        <dbReference type="EC" id="1.17.1.8"/>
    </reaction>
</comment>
<comment type="pathway">
    <text evidence="1">Amino-acid biosynthesis; L-lysine biosynthesis via DAP pathway; (S)-tetrahydrodipicolinate from L-aspartate: step 4/4.</text>
</comment>
<comment type="subcellular location">
    <subcellularLocation>
        <location evidence="1">Cytoplasm</location>
    </subcellularLocation>
</comment>
<comment type="similarity">
    <text evidence="1">Belongs to the DapB family.</text>
</comment>
<comment type="caution">
    <text evidence="2">Was originally thought to be a dihydrodipicolinate reductase (DHDPR), catalyzing the conversion of dihydrodipicolinate to tetrahydrodipicolinate. However, it was shown in E.coli that the substrate of the enzymatic reaction is not dihydrodipicolinate (DHDP) but in fact (2S,4S)-4-hydroxy-2,3,4,5-tetrahydrodipicolinic acid (HTPA), the product released by the DapA-catalyzed reaction.</text>
</comment>
<evidence type="ECO:0000255" key="1">
    <source>
        <dbReference type="HAMAP-Rule" id="MF_00102"/>
    </source>
</evidence>
<evidence type="ECO:0000305" key="2"/>
<reference key="1">
    <citation type="journal article" date="2009" name="PLoS ONE">
        <title>Genome sequence of the pathogenic intestinal spirochete Brachyspira hyodysenteriae reveals adaptations to its lifestyle in the porcine large intestine.</title>
        <authorList>
            <person name="Bellgard M.I."/>
            <person name="Wanchanthuek P."/>
            <person name="La T."/>
            <person name="Ryan K."/>
            <person name="Moolhuijzen P."/>
            <person name="Albertyn Z."/>
            <person name="Shaban B."/>
            <person name="Motro Y."/>
            <person name="Dunn D.S."/>
            <person name="Schibeci D."/>
            <person name="Hunter A."/>
            <person name="Barrero R."/>
            <person name="Phillips N.D."/>
            <person name="Hampson D.J."/>
        </authorList>
    </citation>
    <scope>NUCLEOTIDE SEQUENCE [LARGE SCALE GENOMIC DNA]</scope>
    <source>
        <strain>ATCC 49526 / WA1</strain>
    </source>
</reference>
<sequence length="231" mass="25520">MKVLIHGTGVMSSILKEVIEKEGELEISGFADDFTNEKGDMIIDFSHFSRLPAMIDYSIKNNIPMVICTTGYDETMLAKIVEASTHVPIVLSSNTCIGINLMNEIVSKIAPQLRNFDIEIIETHHNRKVDSPSGTAKSLFNVINDALDNEMFLVSGRNGLHVRDKKEIGMHSVRGGSVVGDHSVIFYGDDEIIEIKHSSTSRRIFANGAIKAAKFLVGKKPGLYRMKEVLA</sequence>
<gene>
    <name evidence="1" type="primary">dapB</name>
    <name type="ordered locus">BHWA1_01387</name>
</gene>
<name>DAPB_BRAHW</name>
<feature type="chain" id="PRO_1000118845" description="4-hydroxy-tetrahydrodipicolinate reductase">
    <location>
        <begin position="1"/>
        <end position="231"/>
    </location>
</feature>
<feature type="active site" description="Proton donor/acceptor" evidence="1">
    <location>
        <position position="124"/>
    </location>
</feature>
<feature type="active site" description="Proton donor" evidence="1">
    <location>
        <position position="128"/>
    </location>
</feature>
<feature type="binding site" evidence="1">
    <location>
        <position position="33"/>
    </location>
    <ligand>
        <name>NAD(+)</name>
        <dbReference type="ChEBI" id="CHEBI:57540"/>
    </ligand>
</feature>
<feature type="binding site" evidence="1">
    <location>
        <begin position="68"/>
        <end position="70"/>
    </location>
    <ligand>
        <name>NAD(+)</name>
        <dbReference type="ChEBI" id="CHEBI:57540"/>
    </ligand>
</feature>
<feature type="binding site" evidence="1">
    <location>
        <begin position="92"/>
        <end position="95"/>
    </location>
    <ligand>
        <name>NAD(+)</name>
        <dbReference type="ChEBI" id="CHEBI:57540"/>
    </ligand>
</feature>
<feature type="binding site" evidence="1">
    <location>
        <position position="125"/>
    </location>
    <ligand>
        <name>(S)-2,3,4,5-tetrahydrodipicolinate</name>
        <dbReference type="ChEBI" id="CHEBI:16845"/>
    </ligand>
</feature>
<feature type="binding site" evidence="1">
    <location>
        <begin position="134"/>
        <end position="135"/>
    </location>
    <ligand>
        <name>(S)-2,3,4,5-tetrahydrodipicolinate</name>
        <dbReference type="ChEBI" id="CHEBI:16845"/>
    </ligand>
</feature>
<protein>
    <recommendedName>
        <fullName evidence="1">4-hydroxy-tetrahydrodipicolinate reductase</fullName>
        <shortName evidence="1">HTPA reductase</shortName>
        <ecNumber evidence="1">1.17.1.8</ecNumber>
    </recommendedName>
</protein>
<dbReference type="EC" id="1.17.1.8" evidence="1"/>
<dbReference type="EMBL" id="CP001357">
    <property type="protein sequence ID" value="ACN83863.1"/>
    <property type="molecule type" value="Genomic_DNA"/>
</dbReference>
<dbReference type="RefSeq" id="WP_012670908.1">
    <property type="nucleotide sequence ID" value="NC_012225.1"/>
</dbReference>
<dbReference type="SMR" id="C0R175"/>
<dbReference type="STRING" id="565034.BHWA1_01387"/>
<dbReference type="GeneID" id="63962485"/>
<dbReference type="KEGG" id="bhy:BHWA1_01387"/>
<dbReference type="eggNOG" id="COG0289">
    <property type="taxonomic scope" value="Bacteria"/>
</dbReference>
<dbReference type="HOGENOM" id="CLU_047479_2_2_12"/>
<dbReference type="UniPathway" id="UPA00034">
    <property type="reaction ID" value="UER00018"/>
</dbReference>
<dbReference type="Proteomes" id="UP000001803">
    <property type="component" value="Chromosome"/>
</dbReference>
<dbReference type="GO" id="GO:0005829">
    <property type="term" value="C:cytosol"/>
    <property type="evidence" value="ECO:0007669"/>
    <property type="project" value="TreeGrafter"/>
</dbReference>
<dbReference type="GO" id="GO:0008839">
    <property type="term" value="F:4-hydroxy-tetrahydrodipicolinate reductase"/>
    <property type="evidence" value="ECO:0007669"/>
    <property type="project" value="UniProtKB-EC"/>
</dbReference>
<dbReference type="GO" id="GO:0051287">
    <property type="term" value="F:NAD binding"/>
    <property type="evidence" value="ECO:0007669"/>
    <property type="project" value="UniProtKB-UniRule"/>
</dbReference>
<dbReference type="GO" id="GO:0050661">
    <property type="term" value="F:NADP binding"/>
    <property type="evidence" value="ECO:0007669"/>
    <property type="project" value="UniProtKB-UniRule"/>
</dbReference>
<dbReference type="GO" id="GO:0016726">
    <property type="term" value="F:oxidoreductase activity, acting on CH or CH2 groups, NAD or NADP as acceptor"/>
    <property type="evidence" value="ECO:0007669"/>
    <property type="project" value="UniProtKB-UniRule"/>
</dbReference>
<dbReference type="GO" id="GO:0019877">
    <property type="term" value="P:diaminopimelate biosynthetic process"/>
    <property type="evidence" value="ECO:0007669"/>
    <property type="project" value="UniProtKB-UniRule"/>
</dbReference>
<dbReference type="GO" id="GO:0009089">
    <property type="term" value="P:lysine biosynthetic process via diaminopimelate"/>
    <property type="evidence" value="ECO:0007669"/>
    <property type="project" value="UniProtKB-UniRule"/>
</dbReference>
<dbReference type="FunFam" id="3.30.360.10:FF:000009">
    <property type="entry name" value="4-hydroxy-tetrahydrodipicolinate reductase"/>
    <property type="match status" value="1"/>
</dbReference>
<dbReference type="Gene3D" id="3.30.360.10">
    <property type="entry name" value="Dihydrodipicolinate Reductase, domain 2"/>
    <property type="match status" value="1"/>
</dbReference>
<dbReference type="Gene3D" id="3.40.50.720">
    <property type="entry name" value="NAD(P)-binding Rossmann-like Domain"/>
    <property type="match status" value="1"/>
</dbReference>
<dbReference type="HAMAP" id="MF_00102">
    <property type="entry name" value="DapB"/>
    <property type="match status" value="1"/>
</dbReference>
<dbReference type="InterPro" id="IPR022663">
    <property type="entry name" value="DapB_C"/>
</dbReference>
<dbReference type="InterPro" id="IPR000846">
    <property type="entry name" value="DapB_N"/>
</dbReference>
<dbReference type="InterPro" id="IPR022664">
    <property type="entry name" value="DapB_N_CS"/>
</dbReference>
<dbReference type="InterPro" id="IPR023940">
    <property type="entry name" value="DHDPR_bac"/>
</dbReference>
<dbReference type="InterPro" id="IPR036291">
    <property type="entry name" value="NAD(P)-bd_dom_sf"/>
</dbReference>
<dbReference type="NCBIfam" id="TIGR00036">
    <property type="entry name" value="dapB"/>
    <property type="match status" value="1"/>
</dbReference>
<dbReference type="PANTHER" id="PTHR20836:SF7">
    <property type="entry name" value="4-HYDROXY-TETRAHYDRODIPICOLINATE REDUCTASE"/>
    <property type="match status" value="1"/>
</dbReference>
<dbReference type="PANTHER" id="PTHR20836">
    <property type="entry name" value="DIHYDRODIPICOLINATE REDUCTASE"/>
    <property type="match status" value="1"/>
</dbReference>
<dbReference type="Pfam" id="PF05173">
    <property type="entry name" value="DapB_C"/>
    <property type="match status" value="1"/>
</dbReference>
<dbReference type="Pfam" id="PF01113">
    <property type="entry name" value="DapB_N"/>
    <property type="match status" value="1"/>
</dbReference>
<dbReference type="PIRSF" id="PIRSF000161">
    <property type="entry name" value="DHPR"/>
    <property type="match status" value="1"/>
</dbReference>
<dbReference type="SUPFAM" id="SSF55347">
    <property type="entry name" value="Glyceraldehyde-3-phosphate dehydrogenase-like, C-terminal domain"/>
    <property type="match status" value="1"/>
</dbReference>
<dbReference type="SUPFAM" id="SSF51735">
    <property type="entry name" value="NAD(P)-binding Rossmann-fold domains"/>
    <property type="match status" value="1"/>
</dbReference>
<dbReference type="PROSITE" id="PS01298">
    <property type="entry name" value="DAPB"/>
    <property type="match status" value="1"/>
</dbReference>